<comment type="function">
    <text evidence="1">F(1)F(0) ATP synthase produces ATP from ADP in the presence of a proton or sodium gradient. F-type ATPases consist of two structural domains, F(1) containing the extramembraneous catalytic core and F(0) containing the membrane proton channel, linked together by a central stalk and a peripheral stalk. During catalysis, ATP synthesis in the catalytic domain of F(1) is coupled via a rotary mechanism of the central stalk subunits to proton translocation.</text>
</comment>
<comment type="function">
    <text evidence="1">Component of the F(0) channel, it forms part of the peripheral stalk, linking F(1) to F(0).</text>
</comment>
<comment type="subunit">
    <text evidence="1">F-type ATPases have 2 components, F(1) - the catalytic core - and F(0) - the membrane proton channel. F(1) has five subunits: alpha(3), beta(3), gamma(1), delta(1), epsilon(1). F(0) has three main subunits: a(1), b(2) and c(10-14). The alpha and beta chains form an alternating ring which encloses part of the gamma chain. F(1) is attached to F(0) by a central stalk formed by the gamma and epsilon chains, while a peripheral stalk is formed by the delta and b chains.</text>
</comment>
<comment type="subcellular location">
    <subcellularLocation>
        <location evidence="1">Cell inner membrane</location>
        <topology evidence="1">Single-pass membrane protein</topology>
    </subcellularLocation>
</comment>
<comment type="similarity">
    <text evidence="1">Belongs to the ATPase B chain family.</text>
</comment>
<protein>
    <recommendedName>
        <fullName evidence="1">ATP synthase subunit b</fullName>
    </recommendedName>
    <alternativeName>
        <fullName evidence="1">ATP synthase F(0) sector subunit b</fullName>
    </alternativeName>
    <alternativeName>
        <fullName evidence="1">ATPase subunit I</fullName>
    </alternativeName>
    <alternativeName>
        <fullName evidence="1">F-type ATPase subunit b</fullName>
        <shortName evidence="1">F-ATPase subunit b</shortName>
    </alternativeName>
</protein>
<keyword id="KW-0066">ATP synthesis</keyword>
<keyword id="KW-0997">Cell inner membrane</keyword>
<keyword id="KW-1003">Cell membrane</keyword>
<keyword id="KW-0138">CF(0)</keyword>
<keyword id="KW-0375">Hydrogen ion transport</keyword>
<keyword id="KW-0406">Ion transport</keyword>
<keyword id="KW-0472">Membrane</keyword>
<keyword id="KW-1185">Reference proteome</keyword>
<keyword id="KW-0812">Transmembrane</keyword>
<keyword id="KW-1133">Transmembrane helix</keyword>
<keyword id="KW-0813">Transport</keyword>
<reference key="1">
    <citation type="journal article" date="1997" name="Nature">
        <title>The complete genome sequence of the gastric pathogen Helicobacter pylori.</title>
        <authorList>
            <person name="Tomb J.-F."/>
            <person name="White O."/>
            <person name="Kerlavage A.R."/>
            <person name="Clayton R.A."/>
            <person name="Sutton G.G."/>
            <person name="Fleischmann R.D."/>
            <person name="Ketchum K.A."/>
            <person name="Klenk H.-P."/>
            <person name="Gill S.R."/>
            <person name="Dougherty B.A."/>
            <person name="Nelson K.E."/>
            <person name="Quackenbush J."/>
            <person name="Zhou L."/>
            <person name="Kirkness E.F."/>
            <person name="Peterson S.N."/>
            <person name="Loftus B.J."/>
            <person name="Richardson D.L."/>
            <person name="Dodson R.J."/>
            <person name="Khalak H.G."/>
            <person name="Glodek A."/>
            <person name="McKenney K."/>
            <person name="FitzGerald L.M."/>
            <person name="Lee N."/>
            <person name="Adams M.D."/>
            <person name="Hickey E.K."/>
            <person name="Berg D.E."/>
            <person name="Gocayne J.D."/>
            <person name="Utterback T.R."/>
            <person name="Peterson J.D."/>
            <person name="Kelley J.M."/>
            <person name="Cotton M.D."/>
            <person name="Weidman J.F."/>
            <person name="Fujii C."/>
            <person name="Bowman C."/>
            <person name="Watthey L."/>
            <person name="Wallin E."/>
            <person name="Hayes W.S."/>
            <person name="Borodovsky M."/>
            <person name="Karp P.D."/>
            <person name="Smith H.O."/>
            <person name="Fraser C.M."/>
            <person name="Venter J.C."/>
        </authorList>
    </citation>
    <scope>NUCLEOTIDE SEQUENCE [LARGE SCALE GENOMIC DNA]</scope>
    <source>
        <strain>ATCC 700392 / 26695</strain>
    </source>
</reference>
<dbReference type="EMBL" id="AE000511">
    <property type="protein sequence ID" value="AAD08178.1"/>
    <property type="molecule type" value="Genomic_DNA"/>
</dbReference>
<dbReference type="PIR" id="H64661">
    <property type="entry name" value="H64661"/>
</dbReference>
<dbReference type="RefSeq" id="NP_207927.1">
    <property type="nucleotide sequence ID" value="NC_000915.1"/>
</dbReference>
<dbReference type="RefSeq" id="WP_000498446.1">
    <property type="nucleotide sequence ID" value="NC_018939.1"/>
</dbReference>
<dbReference type="SMR" id="P56086"/>
<dbReference type="STRING" id="85962.HP_1136"/>
<dbReference type="PaxDb" id="85962-C694_05860"/>
<dbReference type="EnsemblBacteria" id="AAD08178">
    <property type="protein sequence ID" value="AAD08178"/>
    <property type="gene ID" value="HP_1136"/>
</dbReference>
<dbReference type="KEGG" id="heo:C694_05860"/>
<dbReference type="KEGG" id="hpy:HP_1136"/>
<dbReference type="PATRIC" id="fig|85962.47.peg.1218"/>
<dbReference type="eggNOG" id="COG0711">
    <property type="taxonomic scope" value="Bacteria"/>
</dbReference>
<dbReference type="InParanoid" id="P56086"/>
<dbReference type="OrthoDB" id="5373033at2"/>
<dbReference type="Proteomes" id="UP000000429">
    <property type="component" value="Chromosome"/>
</dbReference>
<dbReference type="GO" id="GO:0005886">
    <property type="term" value="C:plasma membrane"/>
    <property type="evidence" value="ECO:0007669"/>
    <property type="project" value="UniProtKB-SubCell"/>
</dbReference>
<dbReference type="GO" id="GO:0045259">
    <property type="term" value="C:proton-transporting ATP synthase complex"/>
    <property type="evidence" value="ECO:0007669"/>
    <property type="project" value="UniProtKB-KW"/>
</dbReference>
<dbReference type="GO" id="GO:0046933">
    <property type="term" value="F:proton-transporting ATP synthase activity, rotational mechanism"/>
    <property type="evidence" value="ECO:0007669"/>
    <property type="project" value="UniProtKB-UniRule"/>
</dbReference>
<dbReference type="CDD" id="cd06503">
    <property type="entry name" value="ATP-synt_Fo_b"/>
    <property type="match status" value="1"/>
</dbReference>
<dbReference type="HAMAP" id="MF_01398">
    <property type="entry name" value="ATP_synth_b_bprime"/>
    <property type="match status" value="1"/>
</dbReference>
<dbReference type="InterPro" id="IPR028987">
    <property type="entry name" value="ATP_synth_B-like_membr_sf"/>
</dbReference>
<dbReference type="InterPro" id="IPR002146">
    <property type="entry name" value="ATP_synth_b/b'su_bac/chlpt"/>
</dbReference>
<dbReference type="NCBIfam" id="NF006292">
    <property type="entry name" value="PRK08475.1"/>
    <property type="match status" value="1"/>
</dbReference>
<dbReference type="Pfam" id="PF00430">
    <property type="entry name" value="ATP-synt_B"/>
    <property type="match status" value="1"/>
</dbReference>
<dbReference type="SUPFAM" id="SSF81573">
    <property type="entry name" value="F1F0 ATP synthase subunit B, membrane domain"/>
    <property type="match status" value="1"/>
</dbReference>
<gene>
    <name evidence="1" type="primary">atpF</name>
    <name type="ordered locus">HP_1136</name>
</gene>
<proteinExistence type="inferred from homology"/>
<organism>
    <name type="scientific">Helicobacter pylori (strain ATCC 700392 / 26695)</name>
    <name type="common">Campylobacter pylori</name>
    <dbReference type="NCBI Taxonomy" id="85962"/>
    <lineage>
        <taxon>Bacteria</taxon>
        <taxon>Pseudomonadati</taxon>
        <taxon>Campylobacterota</taxon>
        <taxon>Epsilonproteobacteria</taxon>
        <taxon>Campylobacterales</taxon>
        <taxon>Helicobacteraceae</taxon>
        <taxon>Helicobacter</taxon>
    </lineage>
</organism>
<evidence type="ECO:0000255" key="1">
    <source>
        <dbReference type="HAMAP-Rule" id="MF_01398"/>
    </source>
</evidence>
<accession>P56086</accession>
<name>ATPF_HELPY</name>
<feature type="chain" id="PRO_0000082376" description="ATP synthase subunit b">
    <location>
        <begin position="1"/>
        <end position="171"/>
    </location>
</feature>
<feature type="transmembrane region" description="Helical" evidence="1">
    <location>
        <begin position="2"/>
        <end position="22"/>
    </location>
</feature>
<sequence>MFVVKMVLGFLILLSPLCATGLDISQTDIIERSLNFLLFVGILWYFSAKKLRSFLRSKSLEISKRLEEIQAQLKVSKENKKKLLKELEQAKEKAELIVSDANKEAYMITQKYELQTKMDVENLIKNSKALMDLEVKKIKRELVESVFKDLRESKKVSFNAQDCVNILKQRL</sequence>